<feature type="chain" id="PRO_1000187450" description="2,3,4,5-tetrahydropyridine-2,6-dicarboxylate N-acetyltransferase">
    <location>
        <begin position="1"/>
        <end position="236"/>
    </location>
</feature>
<reference key="1">
    <citation type="submission" date="2005-03" db="EMBL/GenBank/DDBJ databases">
        <title>Brevibacillus brevis strain 47, complete genome.</title>
        <authorList>
            <person name="Hosoyama A."/>
            <person name="Yamada R."/>
            <person name="Hongo Y."/>
            <person name="Terui Y."/>
            <person name="Ankai A."/>
            <person name="Masuyama W."/>
            <person name="Sekiguchi M."/>
            <person name="Takeda T."/>
            <person name="Asano K."/>
            <person name="Ohji S."/>
            <person name="Ichikawa N."/>
            <person name="Narita S."/>
            <person name="Aoki N."/>
            <person name="Miura H."/>
            <person name="Matsushita S."/>
            <person name="Sekigawa T."/>
            <person name="Yamagata H."/>
            <person name="Yoshikawa H."/>
            <person name="Udaka S."/>
            <person name="Tanikawa S."/>
            <person name="Fujita N."/>
        </authorList>
    </citation>
    <scope>NUCLEOTIDE SEQUENCE [LARGE SCALE GENOMIC DNA]</scope>
    <source>
        <strain>47 / JCM 6285 / NBRC 100599</strain>
    </source>
</reference>
<sequence>MNMMDANEIIAFIQKSEKKTPVKVYVKGNLEGIDFGASSKAFITGPTGVVFGEWKEIEPVLAANADKIEDYVVESDRRNSAIPLLDTKGIQARIEPGAIIRDQVTIGNNAVIMMGASINIGAVIGEGTMIDMNVVVGGRGTIGKNCHIGAGSVIAGVIEPPSAQPVVVEDDVVIGANAVILEGVRVGKGAVVAAGAVVIEDVPPYVVVAGTPARVIKQIDEKTRSKTEIKQELRQL</sequence>
<organism>
    <name type="scientific">Brevibacillus brevis (strain 47 / JCM 6285 / NBRC 100599)</name>
    <dbReference type="NCBI Taxonomy" id="358681"/>
    <lineage>
        <taxon>Bacteria</taxon>
        <taxon>Bacillati</taxon>
        <taxon>Bacillota</taxon>
        <taxon>Bacilli</taxon>
        <taxon>Bacillales</taxon>
        <taxon>Paenibacillaceae</taxon>
        <taxon>Brevibacillus</taxon>
    </lineage>
</organism>
<proteinExistence type="inferred from homology"/>
<accession>C0ZGH9</accession>
<protein>
    <recommendedName>
        <fullName evidence="1">2,3,4,5-tetrahydropyridine-2,6-dicarboxylate N-acetyltransferase</fullName>
        <ecNumber evidence="1">2.3.1.89</ecNumber>
    </recommendedName>
    <alternativeName>
        <fullName evidence="1">Tetrahydrodipicolinate N-acetyltransferase</fullName>
        <shortName evidence="1">THP acetyltransferase</shortName>
        <shortName evidence="1">Tetrahydropicolinate acetylase</shortName>
    </alternativeName>
</protein>
<comment type="function">
    <text evidence="1">Catalyzes the transfer of an acetyl group from acetyl-CoA to tetrahydrodipicolinate.</text>
</comment>
<comment type="catalytic activity">
    <reaction evidence="1">
        <text>(S)-2,3,4,5-tetrahydrodipicolinate + acetyl-CoA + H2O = L-2-acetamido-6-oxoheptanedioate + CoA</text>
        <dbReference type="Rhea" id="RHEA:13085"/>
        <dbReference type="ChEBI" id="CHEBI:15377"/>
        <dbReference type="ChEBI" id="CHEBI:16845"/>
        <dbReference type="ChEBI" id="CHEBI:57287"/>
        <dbReference type="ChEBI" id="CHEBI:57288"/>
        <dbReference type="ChEBI" id="CHEBI:58117"/>
        <dbReference type="EC" id="2.3.1.89"/>
    </reaction>
</comment>
<comment type="pathway">
    <text evidence="1">Amino-acid biosynthesis; L-lysine biosynthesis via DAP pathway; LL-2,6-diaminopimelate from (S)-tetrahydrodipicolinate (acetylase route): step 1/3.</text>
</comment>
<comment type="similarity">
    <text evidence="1">Belongs to the transferase hexapeptide repeat family. DapH subfamily.</text>
</comment>
<dbReference type="EC" id="2.3.1.89" evidence="1"/>
<dbReference type="EMBL" id="AP008955">
    <property type="protein sequence ID" value="BAH44888.1"/>
    <property type="molecule type" value="Genomic_DNA"/>
</dbReference>
<dbReference type="SMR" id="C0ZGH9"/>
<dbReference type="STRING" id="358681.BBR47_39110"/>
<dbReference type="KEGG" id="bbe:BBR47_39110"/>
<dbReference type="eggNOG" id="COG2171">
    <property type="taxonomic scope" value="Bacteria"/>
</dbReference>
<dbReference type="HOGENOM" id="CLU_103751_0_0_9"/>
<dbReference type="UniPathway" id="UPA00034">
    <property type="reaction ID" value="UER00022"/>
</dbReference>
<dbReference type="Proteomes" id="UP000001877">
    <property type="component" value="Chromosome"/>
</dbReference>
<dbReference type="GO" id="GO:0047200">
    <property type="term" value="F:tetrahydrodipicolinate N-acetyltransferase activity"/>
    <property type="evidence" value="ECO:0007669"/>
    <property type="project" value="UniProtKB-EC"/>
</dbReference>
<dbReference type="GO" id="GO:0019877">
    <property type="term" value="P:diaminopimelate biosynthetic process"/>
    <property type="evidence" value="ECO:0007669"/>
    <property type="project" value="UniProtKB-UniRule"/>
</dbReference>
<dbReference type="GO" id="GO:0009089">
    <property type="term" value="P:lysine biosynthetic process via diaminopimelate"/>
    <property type="evidence" value="ECO:0007669"/>
    <property type="project" value="UniProtKB-UniRule"/>
</dbReference>
<dbReference type="Gene3D" id="2.160.10.10">
    <property type="entry name" value="Hexapeptide repeat proteins"/>
    <property type="match status" value="1"/>
</dbReference>
<dbReference type="Gene3D" id="3.30.70.250">
    <property type="entry name" value="Malonyl-CoA ACP transacylase, ACP-binding"/>
    <property type="match status" value="1"/>
</dbReference>
<dbReference type="HAMAP" id="MF_01691">
    <property type="entry name" value="DapH"/>
    <property type="match status" value="1"/>
</dbReference>
<dbReference type="InterPro" id="IPR019873">
    <property type="entry name" value="DapH"/>
</dbReference>
<dbReference type="InterPro" id="IPR013710">
    <property type="entry name" value="DapH_N"/>
</dbReference>
<dbReference type="InterPro" id="IPR001451">
    <property type="entry name" value="Hexapep"/>
</dbReference>
<dbReference type="InterPro" id="IPR018357">
    <property type="entry name" value="Hexapep_transf_CS"/>
</dbReference>
<dbReference type="InterPro" id="IPR050179">
    <property type="entry name" value="Trans_hexapeptide_repeat"/>
</dbReference>
<dbReference type="InterPro" id="IPR011004">
    <property type="entry name" value="Trimer_LpxA-like_sf"/>
</dbReference>
<dbReference type="NCBIfam" id="TIGR03532">
    <property type="entry name" value="DapD_Ac"/>
    <property type="match status" value="1"/>
</dbReference>
<dbReference type="PANTHER" id="PTHR43300:SF10">
    <property type="entry name" value="2,3,4,5-TETRAHYDROPYRIDINE-2,6-DICARBOXYLATE N-ACETYLTRANSFERASE"/>
    <property type="match status" value="1"/>
</dbReference>
<dbReference type="PANTHER" id="PTHR43300">
    <property type="entry name" value="ACETYLTRANSFERASE"/>
    <property type="match status" value="1"/>
</dbReference>
<dbReference type="Pfam" id="PF08503">
    <property type="entry name" value="DapH_N"/>
    <property type="match status" value="1"/>
</dbReference>
<dbReference type="Pfam" id="PF00132">
    <property type="entry name" value="Hexapep"/>
    <property type="match status" value="1"/>
</dbReference>
<dbReference type="Pfam" id="PF14602">
    <property type="entry name" value="Hexapep_2"/>
    <property type="match status" value="1"/>
</dbReference>
<dbReference type="SUPFAM" id="SSF51161">
    <property type="entry name" value="Trimeric LpxA-like enzymes"/>
    <property type="match status" value="1"/>
</dbReference>
<dbReference type="PROSITE" id="PS00101">
    <property type="entry name" value="HEXAPEP_TRANSFERASES"/>
    <property type="match status" value="1"/>
</dbReference>
<gene>
    <name evidence="1" type="primary">dapH</name>
    <name type="ordered locus">BBR47_39110</name>
</gene>
<name>DAPH_BREBN</name>
<evidence type="ECO:0000255" key="1">
    <source>
        <dbReference type="HAMAP-Rule" id="MF_01691"/>
    </source>
</evidence>
<keyword id="KW-0012">Acyltransferase</keyword>
<keyword id="KW-0028">Amino-acid biosynthesis</keyword>
<keyword id="KW-0220">Diaminopimelate biosynthesis</keyword>
<keyword id="KW-0457">Lysine biosynthesis</keyword>
<keyword id="KW-1185">Reference proteome</keyword>
<keyword id="KW-0677">Repeat</keyword>
<keyword id="KW-0808">Transferase</keyword>